<reference key="1">
    <citation type="journal article" date="2007" name="J. Bacteriol.">
        <title>The genome sequence of avian pathogenic Escherichia coli strain O1:K1:H7 shares strong similarities with human extraintestinal pathogenic E. coli genomes.</title>
        <authorList>
            <person name="Johnson T.J."/>
            <person name="Kariyawasam S."/>
            <person name="Wannemuehler Y."/>
            <person name="Mangiamele P."/>
            <person name="Johnson S.J."/>
            <person name="Doetkott C."/>
            <person name="Skyberg J.A."/>
            <person name="Lynne A.M."/>
            <person name="Johnson J.R."/>
            <person name="Nolan L.K."/>
        </authorList>
    </citation>
    <scope>NUCLEOTIDE SEQUENCE [LARGE SCALE GENOMIC DNA]</scope>
</reference>
<feature type="signal peptide" evidence="2">
    <location>
        <begin position="1"/>
        <end position="18"/>
    </location>
</feature>
<feature type="chain" id="PRO_0000413477" description="Lipoprotein NlpI">
    <location>
        <begin position="19"/>
        <end position="294"/>
    </location>
</feature>
<feature type="repeat" description="TPR 1">
    <location>
        <begin position="62"/>
        <end position="95"/>
    </location>
</feature>
<feature type="repeat" description="TPR 2">
    <location>
        <begin position="96"/>
        <end position="129"/>
    </location>
</feature>
<feature type="repeat" description="TPR 3">
    <location>
        <begin position="234"/>
        <end position="267"/>
    </location>
</feature>
<feature type="lipid moiety-binding region" description="N-palmitoyl cysteine" evidence="2">
    <location>
        <position position="19"/>
    </location>
</feature>
<feature type="lipid moiety-binding region" description="S-diacylglycerol cysteine" evidence="2">
    <location>
        <position position="19"/>
    </location>
</feature>
<organism>
    <name type="scientific">Escherichia coli O1:K1 / APEC</name>
    <dbReference type="NCBI Taxonomy" id="405955"/>
    <lineage>
        <taxon>Bacteria</taxon>
        <taxon>Pseudomonadati</taxon>
        <taxon>Pseudomonadota</taxon>
        <taxon>Gammaproteobacteria</taxon>
        <taxon>Enterobacterales</taxon>
        <taxon>Enterobacteriaceae</taxon>
        <taxon>Escherichia</taxon>
    </lineage>
</organism>
<evidence type="ECO:0000250" key="1"/>
<evidence type="ECO:0000255" key="2">
    <source>
        <dbReference type="PROSITE-ProRule" id="PRU00303"/>
    </source>
</evidence>
<sequence>MKPFLRWCFVATALTLAGCSNTSWRKSEVLAVPLQPTLQQEVILARMEQILASRALTDDERAQLLYERGVLYDSLGLRALARNDFSQALAIRPDMPEVFNYLGIYLTQAGNFDAAYEAFDSVLELDPTYNYAHLNRGIALYYGGRDKLAQDDLLAFYQDDPNDPFRSLWLYLAEQKLDEKQAKEVLKQHFEKSDKEQWGWNIVEFYLGNISEQTLMERLKADATDNTSLAEHLSETNFYLGKYYLSLGDLDSATALFKLAVANNVHNFVEHRYALLELSLLGQDQDDLAESDQQ</sequence>
<name>NLPI_ECOK1</name>
<accession>A1AG68</accession>
<proteinExistence type="inferred from homology"/>
<protein>
    <recommendedName>
        <fullName>Lipoprotein NlpI</fullName>
    </recommendedName>
</protein>
<gene>
    <name type="primary">nlpI</name>
    <name type="ordered locus">Ecok1_31640</name>
    <name type="ORF">APECO1_3267</name>
</gene>
<comment type="function">
    <text evidence="1">May be involved in cell division. May play a role in bacterial septation or regulation of cell wall degradation during cell division (By similarity).</text>
</comment>
<comment type="subunit">
    <text evidence="1">Homodimer.</text>
</comment>
<comment type="subcellular location">
    <subcellularLocation>
        <location evidence="2">Cell membrane</location>
        <topology evidence="2">Lipid-anchor</topology>
    </subcellularLocation>
</comment>
<dbReference type="EMBL" id="CP000468">
    <property type="protein sequence ID" value="ABJ02658.1"/>
    <property type="molecule type" value="Genomic_DNA"/>
</dbReference>
<dbReference type="RefSeq" id="WP_000802080.1">
    <property type="nucleotide sequence ID" value="NZ_CADILS010000003.1"/>
</dbReference>
<dbReference type="SMR" id="A1AG68"/>
<dbReference type="GeneID" id="93778820"/>
<dbReference type="KEGG" id="ecv:APECO1_3267"/>
<dbReference type="HOGENOM" id="CLU_071600_0_0_6"/>
<dbReference type="Proteomes" id="UP000008216">
    <property type="component" value="Chromosome"/>
</dbReference>
<dbReference type="GO" id="GO:0005886">
    <property type="term" value="C:plasma membrane"/>
    <property type="evidence" value="ECO:0007669"/>
    <property type="project" value="UniProtKB-SubCell"/>
</dbReference>
<dbReference type="FunFam" id="1.25.40.10:FF:000021">
    <property type="entry name" value="Lipoprotein NlpI"/>
    <property type="match status" value="1"/>
</dbReference>
<dbReference type="Gene3D" id="1.25.40.10">
    <property type="entry name" value="Tetratricopeptide repeat domain"/>
    <property type="match status" value="1"/>
</dbReference>
<dbReference type="InterPro" id="IPR023605">
    <property type="entry name" value="Lipoprotein_NlpI"/>
</dbReference>
<dbReference type="InterPro" id="IPR011990">
    <property type="entry name" value="TPR-like_helical_dom_sf"/>
</dbReference>
<dbReference type="InterPro" id="IPR019734">
    <property type="entry name" value="TPR_rpt"/>
</dbReference>
<dbReference type="InterPro" id="IPR050498">
    <property type="entry name" value="Ycf3"/>
</dbReference>
<dbReference type="NCBIfam" id="NF008391">
    <property type="entry name" value="PRK11189.1"/>
    <property type="match status" value="1"/>
</dbReference>
<dbReference type="PANTHER" id="PTHR44858">
    <property type="entry name" value="TETRATRICOPEPTIDE REPEAT PROTEIN 6"/>
    <property type="match status" value="1"/>
</dbReference>
<dbReference type="PANTHER" id="PTHR44858:SF1">
    <property type="entry name" value="UDP-N-ACETYLGLUCOSAMINE--PEPTIDE N-ACETYLGLUCOSAMINYLTRANSFERASE SPINDLY-RELATED"/>
    <property type="match status" value="1"/>
</dbReference>
<dbReference type="Pfam" id="PF13432">
    <property type="entry name" value="TPR_16"/>
    <property type="match status" value="1"/>
</dbReference>
<dbReference type="PIRSF" id="PIRSF004654">
    <property type="entry name" value="NlpI"/>
    <property type="match status" value="1"/>
</dbReference>
<dbReference type="SMART" id="SM00028">
    <property type="entry name" value="TPR"/>
    <property type="match status" value="3"/>
</dbReference>
<dbReference type="SUPFAM" id="SSF48452">
    <property type="entry name" value="TPR-like"/>
    <property type="match status" value="1"/>
</dbReference>
<dbReference type="PROSITE" id="PS51257">
    <property type="entry name" value="PROKAR_LIPOPROTEIN"/>
    <property type="match status" value="1"/>
</dbReference>
<dbReference type="PROSITE" id="PS50005">
    <property type="entry name" value="TPR"/>
    <property type="match status" value="3"/>
</dbReference>
<dbReference type="PROSITE" id="PS50293">
    <property type="entry name" value="TPR_REGION"/>
    <property type="match status" value="2"/>
</dbReference>
<keyword id="KW-1003">Cell membrane</keyword>
<keyword id="KW-0449">Lipoprotein</keyword>
<keyword id="KW-0472">Membrane</keyword>
<keyword id="KW-0564">Palmitate</keyword>
<keyword id="KW-1185">Reference proteome</keyword>
<keyword id="KW-0677">Repeat</keyword>
<keyword id="KW-0732">Signal</keyword>
<keyword id="KW-0802">TPR repeat</keyword>